<accession>Q93PU7</accession>
<dbReference type="EMBL" id="HM626202">
    <property type="protein sequence ID" value="AAK69561.2"/>
    <property type="molecule type" value="Genomic_DNA"/>
</dbReference>
<dbReference type="RefSeq" id="YP_004750621.1">
    <property type="nucleotide sequence ID" value="NC_015855.1"/>
</dbReference>
<dbReference type="SMR" id="Q93PU7"/>
<dbReference type="Proteomes" id="UP000006503">
    <property type="component" value="Plasmid pGRT1"/>
</dbReference>
<dbReference type="GO" id="GO:0003700">
    <property type="term" value="F:DNA-binding transcription factor activity"/>
    <property type="evidence" value="ECO:0007669"/>
    <property type="project" value="TreeGrafter"/>
</dbReference>
<dbReference type="GO" id="GO:0000976">
    <property type="term" value="F:transcription cis-regulatory region binding"/>
    <property type="evidence" value="ECO:0007669"/>
    <property type="project" value="TreeGrafter"/>
</dbReference>
<dbReference type="Gene3D" id="1.10.357.10">
    <property type="entry name" value="Tetracycline Repressor, domain 2"/>
    <property type="match status" value="1"/>
</dbReference>
<dbReference type="InterPro" id="IPR023772">
    <property type="entry name" value="DNA-bd_HTH_TetR-type_CS"/>
</dbReference>
<dbReference type="InterPro" id="IPR009057">
    <property type="entry name" value="Homeodomain-like_sf"/>
</dbReference>
<dbReference type="InterPro" id="IPR050109">
    <property type="entry name" value="HTH-type_TetR-like_transc_reg"/>
</dbReference>
<dbReference type="InterPro" id="IPR001647">
    <property type="entry name" value="HTH_TetR"/>
</dbReference>
<dbReference type="PANTHER" id="PTHR30055:SF240">
    <property type="entry name" value="HTH-TYPE TRANSCRIPTIONAL REGULATOR ACRR"/>
    <property type="match status" value="1"/>
</dbReference>
<dbReference type="PANTHER" id="PTHR30055">
    <property type="entry name" value="HTH-TYPE TRANSCRIPTIONAL REGULATOR RUTR"/>
    <property type="match status" value="1"/>
</dbReference>
<dbReference type="Pfam" id="PF00440">
    <property type="entry name" value="TetR_N"/>
    <property type="match status" value="1"/>
</dbReference>
<dbReference type="PRINTS" id="PR00455">
    <property type="entry name" value="HTHTETR"/>
</dbReference>
<dbReference type="SUPFAM" id="SSF46689">
    <property type="entry name" value="Homeodomain-like"/>
    <property type="match status" value="1"/>
</dbReference>
<dbReference type="PROSITE" id="PS01081">
    <property type="entry name" value="HTH_TETR_1"/>
    <property type="match status" value="1"/>
</dbReference>
<dbReference type="PROSITE" id="PS50977">
    <property type="entry name" value="HTH_TETR_2"/>
    <property type="match status" value="1"/>
</dbReference>
<name>TTGW_PSEPT</name>
<protein>
    <recommendedName>
        <fullName>Uncharacterized HTH-type transcriptional regulator TtgW</fullName>
    </recommendedName>
</protein>
<evidence type="ECO:0000255" key="1">
    <source>
        <dbReference type="PROSITE-ProRule" id="PRU00335"/>
    </source>
</evidence>
<evidence type="ECO:0000269" key="2">
    <source>
    </source>
</evidence>
<keyword id="KW-0238">DNA-binding</keyword>
<keyword id="KW-0614">Plasmid</keyword>
<keyword id="KW-0804">Transcription</keyword>
<keyword id="KW-0805">Transcription regulation</keyword>
<proteinExistence type="evidence at protein level"/>
<sequence length="134" mass="15030">MARKTAAEAKETRQRIIDAALEVFVAQGVPDATLDQIARKAGVTRGAVYWHFNGKLEVLQAVLASRQHPLELDFTPDLGIERSWEAVVVAMLDAVHSPQSKQFSEILIYQGLDESGLIHNRMVQASDRFLQYIR</sequence>
<reference key="1">
    <citation type="journal article" date="2001" name="J. Bacteriol.">
        <title>Three efflux pumps are required to provide efficient tolerance to toluene in Pseudomonas putida DOT-T1E.</title>
        <authorList>
            <person name="Rojas A."/>
            <person name="Duque E."/>
            <person name="Mosqueda G."/>
            <person name="Golden G."/>
            <person name="Hurtado A."/>
            <person name="Ramos J.L."/>
            <person name="Segura A."/>
        </authorList>
    </citation>
    <scope>NUCLEOTIDE SEQUENCE [GENOMIC DNA]</scope>
    <source>
        <strain>DOT-T1E</strain>
    </source>
</reference>
<reference key="2">
    <citation type="submission" date="2002-07" db="EMBL/GenBank/DDBJ databases">
        <authorList>
            <person name="Rojas A.M."/>
            <person name="Segura A."/>
            <person name="Ramos J.L."/>
        </authorList>
    </citation>
    <scope>SEQUENCE REVISION</scope>
    <source>
        <strain>DOT-T1E</strain>
    </source>
</reference>
<reference key="3">
    <citation type="journal article" date="2011" name="Environ. Microbiol.">
        <title>The pGRT1 plasmid of Pseudomonas putida DOT-T1E encodes functions relevant for survival under harsh conditions in the environment.</title>
        <authorList>
            <person name="Molina L."/>
            <person name="Duque E."/>
            <person name="Gomez M.J."/>
            <person name="Krell T."/>
            <person name="Lacal J."/>
            <person name="Garcia-Puente A."/>
            <person name="Garcia V."/>
            <person name="Matilla M.A."/>
            <person name="Ramos J.L."/>
            <person name="Segura A."/>
        </authorList>
    </citation>
    <scope>NUCLEOTIDE SEQUENCE [LARGE SCALE GENOMIC DNA]</scope>
    <source>
        <strain>DOT-T1E</strain>
    </source>
</reference>
<reference key="4">
    <citation type="journal article" date="2013" name="Microb. Biotechnol.">
        <title>Metabolic potential of the organic-solvent tolerant Pseudomonas putida DOT-T1E deduced from its annotated genome.</title>
        <authorList>
            <person name="Udaondo Z."/>
            <person name="Molina L."/>
            <person name="Daniels C."/>
            <person name="Gomez M.J."/>
            <person name="Molina-Henares M.A."/>
            <person name="Matilla M.A."/>
            <person name="Roca A."/>
            <person name="Fernandez M."/>
            <person name="Duque E."/>
            <person name="Segura A."/>
            <person name="Ramos J.L."/>
        </authorList>
    </citation>
    <scope>NUCLEOTIDE SEQUENCE [LARGE SCALE GENOMIC DNA]</scope>
    <source>
        <strain>DOT-T1E</strain>
    </source>
</reference>
<reference key="5">
    <citation type="journal article" date="2003" name="J. Bacteriol.">
        <title>In vivo and in vitro evidence that TtgV is the specific regulator of the TtgGHI multidrug and solvent efflux pump of Pseudomonas putida.</title>
        <authorList>
            <person name="Rojas A."/>
            <person name="Segura A."/>
            <person name="Guazzaroni M.E."/>
            <person name="Teran W."/>
            <person name="Hurtado A."/>
            <person name="Gallegos M.T."/>
            <person name="Ramos J.L."/>
        </authorList>
    </citation>
    <scope>OPERON ORGANIZATION</scope>
    <scope>INDUCTION</scope>
    <scope>CHARACTERIZATION</scope>
    <source>
        <strain>DOT-T1E</strain>
    </source>
</reference>
<comment type="function">
    <text>Unknown, does not seem to be involved in regulation of the ttgGHI or ttgVW operons.</text>
</comment>
<comment type="induction">
    <text evidence="2">The ttgVW operon is induced by toluene and styrene, but not by the antibiotics carbenicillin, chloramphenicol, nalidixic acid, tetracycline or gentamicin.</text>
</comment>
<feature type="chain" id="PRO_0000070626" description="Uncharacterized HTH-type transcriptional regulator TtgW">
    <location>
        <begin position="1"/>
        <end position="134"/>
    </location>
</feature>
<feature type="domain" description="HTH tetR-type" evidence="1">
    <location>
        <begin position="10"/>
        <end position="70"/>
    </location>
</feature>
<feature type="DNA-binding region" description="H-T-H motif" evidence="1">
    <location>
        <begin position="33"/>
        <end position="52"/>
    </location>
</feature>
<gene>
    <name type="primary">ttgW</name>
</gene>
<organism>
    <name type="scientific">Pseudomonas putida (strain DOT-T1E)</name>
    <dbReference type="NCBI Taxonomy" id="1196325"/>
    <lineage>
        <taxon>Bacteria</taxon>
        <taxon>Pseudomonadati</taxon>
        <taxon>Pseudomonadota</taxon>
        <taxon>Gammaproteobacteria</taxon>
        <taxon>Pseudomonadales</taxon>
        <taxon>Pseudomonadaceae</taxon>
        <taxon>Pseudomonas</taxon>
    </lineage>
</organism>
<geneLocation type="plasmid">
    <name>pGRT1</name>
</geneLocation>